<reference key="1">
    <citation type="journal article" date="2005" name="Proc. Natl. Acad. Sci. U.S.A.">
        <title>The complete genome sequence of Mycobacterium avium subspecies paratuberculosis.</title>
        <authorList>
            <person name="Li L."/>
            <person name="Bannantine J.P."/>
            <person name="Zhang Q."/>
            <person name="Amonsin A."/>
            <person name="May B.J."/>
            <person name="Alt D."/>
            <person name="Banerji N."/>
            <person name="Kanjilal S."/>
            <person name="Kapur V."/>
        </authorList>
    </citation>
    <scope>NUCLEOTIDE SEQUENCE [LARGE SCALE GENOMIC DNA]</scope>
    <source>
        <strain>ATCC BAA-968 / K-10</strain>
    </source>
</reference>
<dbReference type="EC" id="5.6.1.7" evidence="1"/>
<dbReference type="EMBL" id="AE016958">
    <property type="protein sequence ID" value="AAS06815.1"/>
    <property type="molecule type" value="Genomic_DNA"/>
</dbReference>
<dbReference type="SMR" id="P60545"/>
<dbReference type="STRING" id="262316.MAP_4265"/>
<dbReference type="KEGG" id="mpa:MAP_4265"/>
<dbReference type="eggNOG" id="COG0459">
    <property type="taxonomic scope" value="Bacteria"/>
</dbReference>
<dbReference type="HOGENOM" id="CLU_016503_3_0_11"/>
<dbReference type="Proteomes" id="UP000000580">
    <property type="component" value="Chromosome"/>
</dbReference>
<dbReference type="GO" id="GO:0005737">
    <property type="term" value="C:cytoplasm"/>
    <property type="evidence" value="ECO:0007669"/>
    <property type="project" value="UniProtKB-SubCell"/>
</dbReference>
<dbReference type="GO" id="GO:0005524">
    <property type="term" value="F:ATP binding"/>
    <property type="evidence" value="ECO:0007669"/>
    <property type="project" value="UniProtKB-UniRule"/>
</dbReference>
<dbReference type="GO" id="GO:0140662">
    <property type="term" value="F:ATP-dependent protein folding chaperone"/>
    <property type="evidence" value="ECO:0007669"/>
    <property type="project" value="InterPro"/>
</dbReference>
<dbReference type="GO" id="GO:0016853">
    <property type="term" value="F:isomerase activity"/>
    <property type="evidence" value="ECO:0007669"/>
    <property type="project" value="UniProtKB-KW"/>
</dbReference>
<dbReference type="GO" id="GO:0051082">
    <property type="term" value="F:unfolded protein binding"/>
    <property type="evidence" value="ECO:0007669"/>
    <property type="project" value="UniProtKB-UniRule"/>
</dbReference>
<dbReference type="GO" id="GO:0042026">
    <property type="term" value="P:protein refolding"/>
    <property type="evidence" value="ECO:0007669"/>
    <property type="project" value="UniProtKB-UniRule"/>
</dbReference>
<dbReference type="CDD" id="cd03344">
    <property type="entry name" value="GroEL"/>
    <property type="match status" value="1"/>
</dbReference>
<dbReference type="FunFam" id="3.50.7.10:FF:000001">
    <property type="entry name" value="60 kDa chaperonin"/>
    <property type="match status" value="1"/>
</dbReference>
<dbReference type="Gene3D" id="3.50.7.10">
    <property type="entry name" value="GroEL"/>
    <property type="match status" value="1"/>
</dbReference>
<dbReference type="Gene3D" id="1.10.560.10">
    <property type="entry name" value="GroEL-like equatorial domain"/>
    <property type="match status" value="1"/>
</dbReference>
<dbReference type="Gene3D" id="3.30.260.10">
    <property type="entry name" value="TCP-1-like chaperonin intermediate domain"/>
    <property type="match status" value="1"/>
</dbReference>
<dbReference type="HAMAP" id="MF_00600">
    <property type="entry name" value="CH60"/>
    <property type="match status" value="1"/>
</dbReference>
<dbReference type="InterPro" id="IPR018370">
    <property type="entry name" value="Chaperonin_Cpn60_CS"/>
</dbReference>
<dbReference type="InterPro" id="IPR001844">
    <property type="entry name" value="Cpn60/GroEL"/>
</dbReference>
<dbReference type="InterPro" id="IPR002423">
    <property type="entry name" value="Cpn60/GroEL/TCP-1"/>
</dbReference>
<dbReference type="InterPro" id="IPR027409">
    <property type="entry name" value="GroEL-like_apical_dom_sf"/>
</dbReference>
<dbReference type="InterPro" id="IPR027413">
    <property type="entry name" value="GROEL-like_equatorial_sf"/>
</dbReference>
<dbReference type="InterPro" id="IPR027410">
    <property type="entry name" value="TCP-1-like_intermed_sf"/>
</dbReference>
<dbReference type="NCBIfam" id="TIGR02348">
    <property type="entry name" value="GroEL"/>
    <property type="match status" value="1"/>
</dbReference>
<dbReference type="NCBIfam" id="NF000592">
    <property type="entry name" value="PRK00013.1"/>
    <property type="match status" value="1"/>
</dbReference>
<dbReference type="NCBIfam" id="NF009487">
    <property type="entry name" value="PRK12849.1"/>
    <property type="match status" value="1"/>
</dbReference>
<dbReference type="NCBIfam" id="NF009488">
    <property type="entry name" value="PRK12850.1"/>
    <property type="match status" value="1"/>
</dbReference>
<dbReference type="NCBIfam" id="NF009489">
    <property type="entry name" value="PRK12851.1"/>
    <property type="match status" value="1"/>
</dbReference>
<dbReference type="PANTHER" id="PTHR45633">
    <property type="entry name" value="60 KDA HEAT SHOCK PROTEIN, MITOCHONDRIAL"/>
    <property type="match status" value="1"/>
</dbReference>
<dbReference type="Pfam" id="PF00118">
    <property type="entry name" value="Cpn60_TCP1"/>
    <property type="match status" value="1"/>
</dbReference>
<dbReference type="PRINTS" id="PR00298">
    <property type="entry name" value="CHAPERONIN60"/>
</dbReference>
<dbReference type="SUPFAM" id="SSF52029">
    <property type="entry name" value="GroEL apical domain-like"/>
    <property type="match status" value="1"/>
</dbReference>
<dbReference type="SUPFAM" id="SSF48592">
    <property type="entry name" value="GroEL equatorial domain-like"/>
    <property type="match status" value="1"/>
</dbReference>
<dbReference type="SUPFAM" id="SSF54849">
    <property type="entry name" value="GroEL-intermediate domain like"/>
    <property type="match status" value="1"/>
</dbReference>
<dbReference type="PROSITE" id="PS00296">
    <property type="entry name" value="CHAPERONINS_CPN60"/>
    <property type="match status" value="1"/>
</dbReference>
<keyword id="KW-0067">ATP-binding</keyword>
<keyword id="KW-0143">Chaperone</keyword>
<keyword id="KW-0963">Cytoplasm</keyword>
<keyword id="KW-0413">Isomerase</keyword>
<keyword id="KW-0547">Nucleotide-binding</keyword>
<keyword id="KW-1185">Reference proteome</keyword>
<gene>
    <name evidence="1" type="primary">groEL1</name>
    <name evidence="1" type="synonym">groL1</name>
    <name type="ordered locus">MAP_4265</name>
</gene>
<organism>
    <name type="scientific">Mycolicibacterium paratuberculosis (strain ATCC BAA-968 / K-10)</name>
    <name type="common">Mycobacterium paratuberculosis</name>
    <dbReference type="NCBI Taxonomy" id="262316"/>
    <lineage>
        <taxon>Bacteria</taxon>
        <taxon>Bacillati</taxon>
        <taxon>Actinomycetota</taxon>
        <taxon>Actinomycetes</taxon>
        <taxon>Mycobacteriales</taxon>
        <taxon>Mycobacteriaceae</taxon>
        <taxon>Mycobacterium</taxon>
        <taxon>Mycobacterium avium complex (MAC)</taxon>
    </lineage>
</organism>
<feature type="chain" id="PRO_0000063441" description="Chaperonin GroEL 1">
    <location>
        <begin position="1"/>
        <end position="538"/>
    </location>
</feature>
<feature type="binding site" evidence="1">
    <location>
        <begin position="29"/>
        <end position="32"/>
    </location>
    <ligand>
        <name>ATP</name>
        <dbReference type="ChEBI" id="CHEBI:30616"/>
    </ligand>
</feature>
<feature type="binding site" evidence="1">
    <location>
        <begin position="86"/>
        <end position="90"/>
    </location>
    <ligand>
        <name>ATP</name>
        <dbReference type="ChEBI" id="CHEBI:30616"/>
    </ligand>
</feature>
<feature type="binding site" evidence="1">
    <location>
        <position position="413"/>
    </location>
    <ligand>
        <name>ATP</name>
        <dbReference type="ChEBI" id="CHEBI:30616"/>
    </ligand>
</feature>
<feature type="binding site" evidence="1">
    <location>
        <position position="494"/>
    </location>
    <ligand>
        <name>ATP</name>
        <dbReference type="ChEBI" id="CHEBI:30616"/>
    </ligand>
</feature>
<comment type="function">
    <text evidence="1">Together with its co-chaperonin GroES, plays an essential role in assisting protein folding. The GroEL-GroES system forms a nano-cage that allows encapsulation of the non-native substrate proteins and provides a physical environment optimized to promote and accelerate protein folding.</text>
</comment>
<comment type="catalytic activity">
    <reaction evidence="1">
        <text>ATP + H2O + a folded polypeptide = ADP + phosphate + an unfolded polypeptide.</text>
        <dbReference type="EC" id="5.6.1.7"/>
    </reaction>
</comment>
<comment type="subunit">
    <text evidence="1">Forms a cylinder of 14 subunits composed of two heptameric rings stacked back-to-back. Interacts with the co-chaperonin GroES.</text>
</comment>
<comment type="subcellular location">
    <subcellularLocation>
        <location evidence="1">Cytoplasm</location>
    </subcellularLocation>
</comment>
<comment type="similarity">
    <text evidence="1">Belongs to the chaperonin (HSP60) family.</text>
</comment>
<accession>P60545</accession>
<name>CH601_MYCPA</name>
<sequence>MSKIIEYDETARRAIEAGVNTLADAVRVTLGPRGRHVVLAKAFGGPAVTNDGVTVAREIDLEDPFENLGAQLVKSVATKTNDVAGDGTTTATVLAQALVKGGLRLVAAGANPIELGAGISKAADAVSEALLASATPVSGKDAIAQVATVSSRDQVLGELVGEAMTKVGVDGVVSVEESSTLNTELEFTEGVGFDKGFLSAYFVTDFDAQQAVLDDPVILLHQEKISSLPDLLPMLEKVAESGKPLLIIAEDIEGEALATLVVNSIRKTLKAVAVKAPFFGDRRKAFLEDLAIVTGGQVINPDTGLLLREVGTEVLGSARRVVVSKDDTIIVDGGGAKDAVANRIKQLRAEIEKTDSDWDREKLQERLAKLAGGVAVIKVGAATETALKERKESVEDAVAAAKAAVEEGIVAGGGSALLQARKALDELRGSLSGDQALGVDVFAEALGAPLYWIASNAGLDGAVAVHKVAELPAGHGLNAEKLSYGDLIADGVIDPVKVTRSAVLNSASVARMVLTTETAVVDKPAEEADDHGHGHHHH</sequence>
<evidence type="ECO:0000255" key="1">
    <source>
        <dbReference type="HAMAP-Rule" id="MF_00600"/>
    </source>
</evidence>
<proteinExistence type="inferred from homology"/>
<protein>
    <recommendedName>
        <fullName evidence="1">Chaperonin GroEL 1</fullName>
        <ecNumber evidence="1">5.6.1.7</ecNumber>
    </recommendedName>
    <alternativeName>
        <fullName evidence="1">60 kDa chaperonin 1</fullName>
    </alternativeName>
    <alternativeName>
        <fullName evidence="1">Chaperonin-60 1</fullName>
        <shortName evidence="1">Cpn60 1</shortName>
    </alternativeName>
</protein>